<protein>
    <recommendedName>
        <fullName evidence="1">Lipoarabinomannan carrier protein LprG</fullName>
    </recommendedName>
    <alternativeName>
        <fullName evidence="5">Lipoprotein LprG</fullName>
    </alternativeName>
</protein>
<reference evidence="8" key="1">
    <citation type="journal article" date="2009" name="PLoS ONE">
        <title>Non mycobacterial virulence genes in the genome of the emerging pathogen Mycobacterium abscessus.</title>
        <authorList>
            <person name="Ripoll F."/>
            <person name="Pasek S."/>
            <person name="Schenowitz C."/>
            <person name="Dossat C."/>
            <person name="Barbe V."/>
            <person name="Rottman M."/>
            <person name="Macheras E."/>
            <person name="Heym B."/>
            <person name="Herrmann J.L."/>
            <person name="Daffe M."/>
            <person name="Brosch R."/>
            <person name="Risler J.L."/>
            <person name="Gaillard J.L."/>
        </authorList>
    </citation>
    <scope>NUCLEOTIDE SEQUENCE [LARGE SCALE GENOMIC DNA]</scope>
    <source>
        <strain>ATCC 19977 / DSM 44196 / CCUG 20993 / CIP 104536 / JCM 13569 / NCTC 13031 / TMC 1543 / L948</strain>
    </source>
</reference>
<reference key="2">
    <citation type="journal article" date="2019" name="Mol. Microbiol.">
        <title>Increased drug permeability of a stiffened mycobacterial outer membrane in cells lacking MFS transporter Rv1410 and lipoprotein LprG.</title>
        <authorList>
            <person name="Hohl M."/>
            <person name="Remm S."/>
            <person name="Eskandarian H.A."/>
            <person name="Dal Molin M."/>
            <person name="Arnold F.M."/>
            <person name="Huerlimann L.M."/>
            <person name="Kruegel A."/>
            <person name="Fantner G.E."/>
            <person name="Sander P."/>
            <person name="Seeger M.A."/>
        </authorList>
    </citation>
    <scope>OPERON STRUCTURE</scope>
    <scope>DISRUPTION PHENOTYPE</scope>
    <source>
        <strain>ATCC 19977 / DSM 44196 / CCUG 20993 / CIP 104536 / JCM 13569 / NCTC 13031 / TMC 1543 / L948</strain>
    </source>
</reference>
<sequence length="225" mass="23244">MRNRIRLALIPVAVAAIALAGCSKTDKADPNLPEAATLLSESAATTKTQTSTHIVLKVTGDKPTLKLSDLTGDLTTKPAVAAKGTAKTGGLELPFVVVDGELFAQLGSAYSSMGPVKDVYDVGLILDPNKGLANLLANITGAKSEKTETIDGVDSVLVTGTMSKDALNTFTGGTTLTADIPAKAWIQKDGNHALTKISVDTSPGNTIEMSLSDWGKPVTVDKPAQ</sequence>
<name>LPRG_MYCA9</name>
<evidence type="ECO:0000250" key="1">
    <source>
        <dbReference type="UniProtKB" id="P9WK45"/>
    </source>
</evidence>
<evidence type="ECO:0000250" key="2">
    <source>
        <dbReference type="UniProtKB" id="P9WK47"/>
    </source>
</evidence>
<evidence type="ECO:0000255" key="3">
    <source>
        <dbReference type="PROSITE-ProRule" id="PRU00303"/>
    </source>
</evidence>
<evidence type="ECO:0000269" key="4">
    <source>
    </source>
</evidence>
<evidence type="ECO:0000303" key="5">
    <source>
    </source>
</evidence>
<evidence type="ECO:0000303" key="6">
    <source>
    </source>
</evidence>
<evidence type="ECO:0000305" key="7"/>
<evidence type="ECO:0000312" key="8">
    <source>
        <dbReference type="EMBL" id="CAM62885.1"/>
    </source>
</evidence>
<gene>
    <name evidence="6" type="primary">lprG</name>
    <name evidence="8" type="ordered locus">MAB_2806</name>
</gene>
<feature type="signal peptide" evidence="3">
    <location>
        <begin position="1"/>
        <end position="21"/>
    </location>
</feature>
<feature type="chain" id="PRO_5002765895" description="Lipoarabinomannan carrier protein LprG" evidence="3">
    <location>
        <begin position="22"/>
        <end position="225"/>
    </location>
</feature>
<feature type="lipid moiety-binding region" description="N-palmitoyl cysteine" evidence="3">
    <location>
        <position position="22"/>
    </location>
</feature>
<feature type="lipid moiety-binding region" description="S-diacylglycerol cysteine" evidence="3">
    <location>
        <position position="22"/>
    </location>
</feature>
<organism>
    <name type="scientific">Mycobacteroides abscessus (strain ATCC 19977 / DSM 44196 / CCUG 20993 / CIP 104536 / JCM 13569 / NCTC 13031 / TMC 1543 / L948)</name>
    <name type="common">Mycobacterium abscessus</name>
    <dbReference type="NCBI Taxonomy" id="561007"/>
    <lineage>
        <taxon>Bacteria</taxon>
        <taxon>Bacillati</taxon>
        <taxon>Actinomycetota</taxon>
        <taxon>Actinomycetes</taxon>
        <taxon>Mycobacteriales</taxon>
        <taxon>Mycobacteriaceae</taxon>
        <taxon>Mycobacteroides</taxon>
        <taxon>Mycobacteroides abscessus</taxon>
    </lineage>
</organism>
<accession>B1MCB4</accession>
<keyword id="KW-0046">Antibiotic resistance</keyword>
<keyword id="KW-0997">Cell inner membrane</keyword>
<keyword id="KW-1003">Cell membrane</keyword>
<keyword id="KW-0445">Lipid transport</keyword>
<keyword id="KW-0446">Lipid-binding</keyword>
<keyword id="KW-0449">Lipoprotein</keyword>
<keyword id="KW-0472">Membrane</keyword>
<keyword id="KW-0564">Palmitate</keyword>
<keyword id="KW-1185">Reference proteome</keyword>
<keyword id="KW-0732">Signal</keyword>
<keyword id="KW-0813">Transport</keyword>
<comment type="function">
    <text evidence="1">Helps membrane protein MAB_2807 (P55) transport triacylglycerides (TAG) across the inner cell membrane into the periplasm and probably ultimately to the outer membrane (By similarity). Binds TAG in its hydrophobic cavity and transfers it between lipid bilayers (By similarity). TAG probably regulates lipid metabolism and growth regulation and plays a structural role in the outer membrane (By similarity). Also binds mannosides, lipoarabinomannan and lipomannan and various glycolipids in the same cavity (By similarity).</text>
</comment>
<comment type="subcellular location">
    <subcellularLocation>
        <location evidence="3">Cell inner membrane</location>
        <topology evidence="3">Lipid-anchor</topology>
        <orientation evidence="7">Periplasmic side</orientation>
    </subcellularLocation>
</comment>
<comment type="induction">
    <text evidence="4">Part of the lrpG-MAB_2807 operon (PubMed:30742339).</text>
</comment>
<comment type="domain">
    <text evidence="1">Forms a U-shaped beta-half-barrel with a small hydrophobic cavity able to hold a triacylated lipid or triacylglyceride (By similarity). A flexible lid region may move to accommodate different TAG molecules (By similarity).</text>
</comment>
<comment type="PTM">
    <text evidence="2">Modified by Lgt on Cys-22 with an S-linked diacylglyceral, signal peptide is removed by LspA, Cys-22 is further modifed with a fatty acid on its amino group by Lnt yielding a triacylated protein (By similarity).</text>
</comment>
<comment type="disruption phenotype">
    <text evidence="4">A double lprG-mfs deletion strain is more sensitive to the antibiotics tetracyline, vancomycin, rifabutin, clofazimine, novobiocin and ofloxacin (PubMed:30742339).</text>
</comment>
<comment type="miscellaneous">
    <text evidence="7">Bacterial LAM blocks host cell phagosome-lysosome fusion and is one way in which Mycobacteria evade the host immune system.</text>
</comment>
<comment type="miscellaneous">
    <text evidence="7">Triacylglycerides accumulate in lipid droplets in the cytoplasm of M.tuberculosis stationary phase and dormant bacteria, and are used as an energy source during starvation.</text>
</comment>
<comment type="similarity">
    <text evidence="7">Belongs to the LppX/LprAFG lipoprotein family.</text>
</comment>
<proteinExistence type="evidence at transcript level"/>
<dbReference type="EMBL" id="CU458896">
    <property type="protein sequence ID" value="CAM62885.1"/>
    <property type="molecule type" value="Genomic_DNA"/>
</dbReference>
<dbReference type="RefSeq" id="WP_005068781.1">
    <property type="nucleotide sequence ID" value="NZ_MLCG01000003.1"/>
</dbReference>
<dbReference type="SMR" id="B1MCB4"/>
<dbReference type="GeneID" id="93379737"/>
<dbReference type="KEGG" id="mab:MAB_2806"/>
<dbReference type="Proteomes" id="UP000007137">
    <property type="component" value="Chromosome"/>
</dbReference>
<dbReference type="GO" id="GO:0005886">
    <property type="term" value="C:plasma membrane"/>
    <property type="evidence" value="ECO:0007669"/>
    <property type="project" value="UniProtKB-SubCell"/>
</dbReference>
<dbReference type="GO" id="GO:0008289">
    <property type="term" value="F:lipid binding"/>
    <property type="evidence" value="ECO:0007669"/>
    <property type="project" value="UniProtKB-KW"/>
</dbReference>
<dbReference type="GO" id="GO:0006869">
    <property type="term" value="P:lipid transport"/>
    <property type="evidence" value="ECO:0007669"/>
    <property type="project" value="UniProtKB-KW"/>
</dbReference>
<dbReference type="GO" id="GO:0046677">
    <property type="term" value="P:response to antibiotic"/>
    <property type="evidence" value="ECO:0007669"/>
    <property type="project" value="UniProtKB-KW"/>
</dbReference>
<dbReference type="CDD" id="cd16334">
    <property type="entry name" value="LppX-like"/>
    <property type="match status" value="1"/>
</dbReference>
<dbReference type="Gene3D" id="2.50.20.20">
    <property type="match status" value="1"/>
</dbReference>
<dbReference type="InterPro" id="IPR029046">
    <property type="entry name" value="LolA/LolB/LppX"/>
</dbReference>
<dbReference type="InterPro" id="IPR009830">
    <property type="entry name" value="LppX/LprAFG"/>
</dbReference>
<dbReference type="Pfam" id="PF07161">
    <property type="entry name" value="LppX_LprAFG"/>
    <property type="match status" value="1"/>
</dbReference>
<dbReference type="SUPFAM" id="SSF89392">
    <property type="entry name" value="Prokaryotic lipoproteins and lipoprotein localization factors"/>
    <property type="match status" value="1"/>
</dbReference>
<dbReference type="PROSITE" id="PS51257">
    <property type="entry name" value="PROKAR_LIPOPROTEIN"/>
    <property type="match status" value="1"/>
</dbReference>